<feature type="chain" id="PRO_0000422997" description="Acyclic carotenoid 1,2-hydratase">
    <location>
        <begin position="1"/>
        <end position="406"/>
    </location>
</feature>
<feature type="region of interest" description="Disordered" evidence="1">
    <location>
        <begin position="1"/>
        <end position="48"/>
    </location>
</feature>
<feature type="region of interest" description="Disordered" evidence="1">
    <location>
        <begin position="61"/>
        <end position="101"/>
    </location>
</feature>
<feature type="compositionally biased region" description="Basic and acidic residues" evidence="1">
    <location>
        <begin position="8"/>
        <end position="20"/>
    </location>
</feature>
<feature type="compositionally biased region" description="Low complexity" evidence="1">
    <location>
        <begin position="21"/>
        <end position="34"/>
    </location>
</feature>
<feature type="compositionally biased region" description="Basic and acidic residues" evidence="1">
    <location>
        <begin position="81"/>
        <end position="97"/>
    </location>
</feature>
<sequence>MRAAESGADARVRPVDRVEPADAPAGDAGGLRAAVPGDGGSAVRPGDARLDVLVPPGLVDEPAAGALPGGGQRAPGAGRADGGDVRPVGGRDADGAPRFDQPVPPGGYLWWYVDAVSDDGRHGLTFIAFVGSVFSPYYAWAGGPKADRADPENHCALNIALYGDAGKRWTMTERGRRWMRRSRDEFVIGPSRLHWDGESLLVEFDEVGVPIPRRVKGRVRVWPKALCRFVTSLDSGGRHRWGPIAPCSRIEVELDSPRVRWSGHAYLDSNEGDEPIDRPFREWDWSRATMADSSTAVIYDVRQKRDGDRVIAERFLLDGSTESFEAPPRQPLPTTLWRIGRTMRTEPGVPALVEQTLEDTPFYARSMVRSGLLGEVVTSVHETMLLPRVITLPVRLMLPWRMPRRA</sequence>
<organism>
    <name type="scientific">Rubrivivax gelatinosus</name>
    <name type="common">Rhodocyclus gelatinosus</name>
    <name type="synonym">Rhodopseudomonas gelatinosa</name>
    <dbReference type="NCBI Taxonomy" id="28068"/>
    <lineage>
        <taxon>Bacteria</taxon>
        <taxon>Pseudomonadati</taxon>
        <taxon>Pseudomonadota</taxon>
        <taxon>Betaproteobacteria</taxon>
        <taxon>Burkholderiales</taxon>
        <taxon>Sphaerotilaceae</taxon>
        <taxon>Rubrivivax</taxon>
    </lineage>
</organism>
<proteinExistence type="evidence at protein level"/>
<reference key="1">
    <citation type="journal article" date="1996" name="Mol. Gen. Genet.">
        <title>Development of gene transfer methods for Rubrivivax gelatinosus S1: construction, characterization and complementation of a puf operon deletion strain.</title>
        <authorList>
            <person name="Ouchane S."/>
            <person name="Picaud M."/>
            <person name="Reiss-Husson F."/>
            <person name="Vernotte C."/>
            <person name="Astier C."/>
        </authorList>
    </citation>
    <scope>NUCLEOTIDE SEQUENCE [GENOMIC DNA]</scope>
    <source>
        <strain>S1</strain>
    </source>
</reference>
<reference key="2">
    <citation type="journal article" date="1997" name="EMBO J.">
        <title>Photooxidative stress stimulates illegitimate recombination and mutability in carotenoid-less mutants of Rubrivivax gelatinosus.</title>
        <authorList>
            <person name="Ouchane S."/>
            <person name="Picaud M."/>
            <person name="Vernotte C."/>
            <person name="Astier C."/>
        </authorList>
    </citation>
    <scope>NUCLEOTIDE SEQUENCE [GENOMIC DNA]</scope>
    <source>
        <strain>S1</strain>
    </source>
</reference>
<reference key="3">
    <citation type="journal article" date="1997" name="J. Biol. Chem.">
        <title>Pleiotropic effects of puf interposon mutagenesis on carotenoid biosynthesis in Rubrivivax gelatinosus. A new gene organization in purple bacteria.</title>
        <authorList>
            <person name="Ouchane S."/>
            <person name="Picaud M."/>
            <person name="Vernotte C."/>
            <person name="Reiss-Husson F."/>
            <person name="Astier C."/>
        </authorList>
    </citation>
    <scope>NUCLEOTIDE SEQUENCE [GENOMIC DNA]</scope>
    <source>
        <strain>S1</strain>
    </source>
</reference>
<reference key="4">
    <citation type="journal article" date="2002" name="J. Bacteriol.">
        <title>Rubrivivax gelatinosus acsF (previously orf358) codes for a conserved, putative binuclear-iron-cluster-containing protein involved in aerobic oxidative cyclization of Mg-protoporphyrin IX monomethylester.</title>
        <authorList>
            <person name="Pinta V."/>
            <person name="Picaud M."/>
            <person name="Reiss-Husson F."/>
            <person name="Astier C."/>
        </authorList>
    </citation>
    <scope>NUCLEOTIDE SEQUENCE [GENOMIC DNA]</scope>
    <source>
        <strain>S1</strain>
    </source>
</reference>
<reference key="5">
    <citation type="journal article" date="2003" name="Arch. Microbiol.">
        <title>Characterization of unusual hydroxy- and ketocarotenoids in Rubrivivax gelatinosus: involvement of enzyme CrtF or CrtA.</title>
        <authorList>
            <person name="Pinta V."/>
            <person name="Ouchane S."/>
            <person name="Picaud M."/>
            <person name="Takaichi S."/>
            <person name="Astier C."/>
            <person name="Reiss-Husson F."/>
        </authorList>
    </citation>
    <scope>NUCLEOTIDE SEQUENCE [GENOMIC DNA]</scope>
    <source>
        <strain>S1</strain>
    </source>
</reference>
<reference key="6">
    <citation type="journal article" date="2003" name="Arch. Biochem. Biophys.">
        <title>Heterologous expression, purification, and enzymatic characterization of the acyclic carotenoid 1,2-hydratase from Rubrivivax gelatinosus.</title>
        <authorList>
            <person name="Steiger S."/>
            <person name="Mazet A."/>
            <person name="Sandmann G."/>
        </authorList>
    </citation>
    <scope>FUNCTION</scope>
    <scope>CATALYTIC ACTIVITY</scope>
    <scope>BIOPHYSICOCHEMICAL PROPERTIES</scope>
    <scope>SUBCELLULAR LOCATION</scope>
    <scope>SUBSTRATE SPECIFICITY</scope>
    <source>
        <strain>S1</strain>
    </source>
</reference>
<reference key="7">
    <citation type="journal article" date="2011" name="Appl. Microbiol. Biotechnol.">
        <title>Biochemical characterization of the carotenoid 1,2-hydratases (CrtC) from Rubrivivax gelatinosus and Thiocapsa roseopersicina.</title>
        <authorList>
            <person name="Hiseni A."/>
            <person name="Arends I.W."/>
            <person name="Otten L.G."/>
        </authorList>
    </citation>
    <scope>FUNCTION</scope>
    <scope>CATALYTIC ACTIVITY</scope>
    <scope>BIOPHYSICOCHEMICAL PROPERTIES</scope>
    <scope>SUBSTRATE SPECIFICITY</scope>
</reference>
<evidence type="ECO:0000256" key="1">
    <source>
        <dbReference type="SAM" id="MobiDB-lite"/>
    </source>
</evidence>
<evidence type="ECO:0000269" key="2">
    <source>
    </source>
</evidence>
<evidence type="ECO:0000269" key="3">
    <source>
    </source>
</evidence>
<evidence type="ECO:0000305" key="4"/>
<dbReference type="EC" id="4.2.1.131" evidence="2 3"/>
<dbReference type="EMBL" id="AH012710">
    <property type="protein sequence ID" value="AAO93124.1"/>
    <property type="molecule type" value="Genomic_DNA"/>
</dbReference>
<dbReference type="SMR" id="P95619"/>
<dbReference type="BioCyc" id="MetaCyc:MONOMER-15841"/>
<dbReference type="BRENDA" id="4.2.1.131">
    <property type="organism ID" value="5401"/>
</dbReference>
<dbReference type="SABIO-RK" id="P95619"/>
<dbReference type="UniPathway" id="UPA00683"/>
<dbReference type="GO" id="GO:0005886">
    <property type="term" value="C:plasma membrane"/>
    <property type="evidence" value="ECO:0007669"/>
    <property type="project" value="UniProtKB-SubCell"/>
</dbReference>
<dbReference type="GO" id="GO:0016836">
    <property type="term" value="F:hydro-lyase activity"/>
    <property type="evidence" value="ECO:0000314"/>
    <property type="project" value="UniProtKB"/>
</dbReference>
<dbReference type="GO" id="GO:0016116">
    <property type="term" value="P:carotenoid metabolic process"/>
    <property type="evidence" value="ECO:0000314"/>
    <property type="project" value="UniProtKB"/>
</dbReference>
<dbReference type="GO" id="GO:0015995">
    <property type="term" value="P:chlorophyll biosynthetic process"/>
    <property type="evidence" value="ECO:0007669"/>
    <property type="project" value="UniProtKB-KW"/>
</dbReference>
<dbReference type="GO" id="GO:0015979">
    <property type="term" value="P:photosynthesis"/>
    <property type="evidence" value="ECO:0007669"/>
    <property type="project" value="UniProtKB-KW"/>
</dbReference>
<dbReference type="GO" id="GO:1901180">
    <property type="term" value="P:spheroidene biosynthetic process"/>
    <property type="evidence" value="ECO:0000314"/>
    <property type="project" value="UniProtKB"/>
</dbReference>
<dbReference type="CDD" id="cd21471">
    <property type="entry name" value="CrtC-like"/>
    <property type="match status" value="1"/>
</dbReference>
<dbReference type="SUPFAM" id="SSF159245">
    <property type="entry name" value="AttH-like"/>
    <property type="match status" value="1"/>
</dbReference>
<name>CRTC_RUBGE</name>
<keyword id="KW-0125">Carotenoid biosynthesis</keyword>
<keyword id="KW-1003">Cell membrane</keyword>
<keyword id="KW-0149">Chlorophyll biosynthesis</keyword>
<keyword id="KW-0456">Lyase</keyword>
<keyword id="KW-0472">Membrane</keyword>
<keyword id="KW-0602">Photosynthesis</keyword>
<accession>P95619</accession>
<comment type="function">
    <text evidence="2 3">Involved in the biosynthesis of carotenoids spheroidene and spirilloxanthin. Catalyzes the hydration of neurosporene to the corresponding hydroxylated carotenoids 1-HO-neurosporene and 1,1'-(HO)2-neurosporene and that of lycopene to 1-HO-lycopene and 1,1'-(HO)2-lycopene. Can also act on demethylspheroidene, spheroidene, 1-HO-3,4-didehydrolycopene and geranylgeraniol.</text>
</comment>
<comment type="catalytic activity">
    <reaction evidence="2 3">
        <text>rhodopin = all-trans-lycopene + H2O</text>
        <dbReference type="Rhea" id="RHEA:31607"/>
        <dbReference type="ChEBI" id="CHEBI:15377"/>
        <dbReference type="ChEBI" id="CHEBI:15948"/>
        <dbReference type="ChEBI" id="CHEBI:35331"/>
        <dbReference type="EC" id="4.2.1.131"/>
    </reaction>
</comment>
<comment type="catalytic activity">
    <reaction evidence="2 3">
        <text>1,1'-dihydroxy-1,1',2,2'-tetrahydrolycopene = rhodopin + H2O</text>
        <dbReference type="Rhea" id="RHEA:31611"/>
        <dbReference type="ChEBI" id="CHEBI:15377"/>
        <dbReference type="ChEBI" id="CHEBI:35331"/>
        <dbReference type="ChEBI" id="CHEBI:63065"/>
        <dbReference type="EC" id="4.2.1.131"/>
    </reaction>
</comment>
<comment type="catalytic activity">
    <reaction evidence="2 3">
        <text>1-hydroxy-all-trans-1,2-dihydro-neurosporene = all-trans-neurosporene + H2O</text>
        <dbReference type="Rhea" id="RHEA:54220"/>
        <dbReference type="ChEBI" id="CHEBI:15377"/>
        <dbReference type="ChEBI" id="CHEBI:16833"/>
        <dbReference type="ChEBI" id="CHEBI:138077"/>
        <dbReference type="EC" id="4.2.1.131"/>
    </reaction>
</comment>
<comment type="catalytic activity">
    <reaction evidence="2 3">
        <text>1,1'-dihydroxy-1,1',2,2'-tetrahydroneurosporene = 1-hydroxy-all-trans-1,2-dihydro-neurosporene + H2O</text>
        <dbReference type="Rhea" id="RHEA:54148"/>
        <dbReference type="ChEBI" id="CHEBI:15377"/>
        <dbReference type="ChEBI" id="CHEBI:138076"/>
        <dbReference type="ChEBI" id="CHEBI:138077"/>
        <dbReference type="EC" id="4.2.1.131"/>
    </reaction>
</comment>
<comment type="biophysicochemical properties">
    <kinetics>
        <KM evidence="2 3">7.8 uM for spheroidene (at pH 8 and at 28 degrees Celsius)</KM>
        <KM evidence="2 3">24.7 uM for lycopene (at pH 8 and at 28 degrees Celsius)</KM>
        <KM evidence="2 3">26.9 uM for lycopene (at pH 8 and at 28 degrees Celsius)</KM>
        <KM evidence="2 3">36.8 uM for 1-HO-neurosporene (at pH 8 and at 28 degrees Celsius)</KM>
        <KM evidence="2 3">38.5 uM for neurosporene (at pH 8 and at 28 degrees Celsius)</KM>
        <Vmax evidence="2 3">0.32 nmol/h/mg enzyme with lycopene as substrate (at pH 8 and at 28 degrees Celsius)</Vmax>
        <Vmax evidence="2 3">0.54 nmol/h/mg enzyme with lycopene as substrate (at pH 8 and at 28 degrees Celsius)</Vmax>
        <Vmax evidence="2 3">0.78 nmol/h/mg enzyme with 1-HO-neurosporene as substrate (at pH 8 and at 28 degrees Celsius)</Vmax>
        <Vmax evidence="2 3">2.73 nmol/h/mg enzyme with neurosporene as substrate (at pH 8 and at 28 degrees Celsius)</Vmax>
        <Vmax evidence="2 3">4.92 nmol/h/mg enzyme with spheroidene as substrate (at pH 8 and at 28 degrees Celsius)</Vmax>
    </kinetics>
    <phDependence>
        <text evidence="2 3">Optimum pH is 8. No activity is detected at pH 4.0-5.0. At higher pH values, it shows rapid decrease in activity, although 50% of the relative activity is still detected at pH 9.0. It retains much residual activity after 30 minutes incubation at pH 4.0-8.0, indicating that CrtC is stable in both slightly alkaline and acid environments.</text>
    </phDependence>
    <temperatureDependence>
        <text evidence="2 3">Optimum temperature is 30 degrees Celsius. Enzyme activity is significantly lower at 20 degrees Celsius and 40 degrees Celsius.</text>
    </temperatureDependence>
</comment>
<comment type="pathway">
    <text>Carotenoid biosynthesis; spheroidene biosynthesis.</text>
</comment>
<comment type="subcellular location">
    <subcellularLocation>
        <location evidence="2">Cell membrane</location>
    </subcellularLocation>
</comment>
<comment type="similarity">
    <text evidence="4">Belongs to the CrtC hydratase family.</text>
</comment>
<gene>
    <name type="primary">crtC</name>
</gene>
<protein>
    <recommendedName>
        <fullName>Acyclic carotenoid 1,2-hydratase</fullName>
        <ecNumber evidence="2 3">4.2.1.131</ecNumber>
    </recommendedName>
    <alternativeName>
        <fullName>1-hydroxyneurosporene hydratase</fullName>
    </alternativeName>
    <alternativeName>
        <fullName>Hydroxylycopene hydratase</fullName>
    </alternativeName>
    <alternativeName>
        <fullName>Hydroxyneurosporene synthase</fullName>
    </alternativeName>
    <alternativeName>
        <fullName>Lycopene hydratase</fullName>
    </alternativeName>
    <alternativeName>
        <fullName>Neurosporene hydratase</fullName>
    </alternativeName>
</protein>